<accession>P0C7X9</accession>
<comment type="function">
    <text evidence="1">Peptide which can recruit, activate and subsequently lyse human neutrophils, thus eliminating the main cellular defense against infection.</text>
</comment>
<comment type="similarity">
    <text evidence="2">Belongs to the phenol-soluble modulin alpha peptides family.</text>
</comment>
<gene>
    <name type="primary">psmA1</name>
    <name type="ordered locus">SaurJH1_0486.4</name>
</gene>
<reference key="1">
    <citation type="submission" date="2007-06" db="EMBL/GenBank/DDBJ databases">
        <title>Complete sequence of chromosome of Staphylococcus aureus subsp. aureus JH1.</title>
        <authorList>
            <consortium name="US DOE Joint Genome Institute"/>
            <person name="Copeland A."/>
            <person name="Lucas S."/>
            <person name="Lapidus A."/>
            <person name="Barry K."/>
            <person name="Detter J.C."/>
            <person name="Glavina del Rio T."/>
            <person name="Hammon N."/>
            <person name="Israni S."/>
            <person name="Dalin E."/>
            <person name="Tice H."/>
            <person name="Pitluck S."/>
            <person name="Chain P."/>
            <person name="Malfatti S."/>
            <person name="Shin M."/>
            <person name="Vergez L."/>
            <person name="Schmutz J."/>
            <person name="Larimer F."/>
            <person name="Land M."/>
            <person name="Hauser L."/>
            <person name="Kyrpides N."/>
            <person name="Ivanova N."/>
            <person name="Tomasz A."/>
            <person name="Richardson P."/>
        </authorList>
    </citation>
    <scope>NUCLEOTIDE SEQUENCE [LARGE SCALE GENOMIC DNA]</scope>
    <source>
        <strain>JH1</strain>
    </source>
</reference>
<organism>
    <name type="scientific">Staphylococcus aureus (strain JH1)</name>
    <dbReference type="NCBI Taxonomy" id="359787"/>
    <lineage>
        <taxon>Bacteria</taxon>
        <taxon>Bacillati</taxon>
        <taxon>Bacillota</taxon>
        <taxon>Bacilli</taxon>
        <taxon>Bacillales</taxon>
        <taxon>Staphylococcaceae</taxon>
        <taxon>Staphylococcus</taxon>
    </lineage>
</organism>
<protein>
    <recommendedName>
        <fullName>Phenol-soluble modulin alpha 1 peptide</fullName>
    </recommendedName>
</protein>
<proteinExistence type="inferred from homology"/>
<feature type="peptide" id="PRO_0000345030" description="Phenol-soluble modulin alpha 1 peptide">
    <location>
        <begin position="1"/>
        <end position="21"/>
    </location>
</feature>
<keyword id="KW-0204">Cytolysis</keyword>
<keyword id="KW-0843">Virulence</keyword>
<sequence>MGIIAGIIKVIKSLIEQFTGK</sequence>
<evidence type="ECO:0000250" key="1">
    <source>
        <dbReference type="UniProtKB" id="A9JX05"/>
    </source>
</evidence>
<evidence type="ECO:0000305" key="2"/>
<name>PSMA1_STAA2</name>
<dbReference type="EMBL" id="CP000736">
    <property type="status" value="NOT_ANNOTATED_CDS"/>
    <property type="molecule type" value="Genomic_DNA"/>
</dbReference>
<dbReference type="SMR" id="P0C7X9"/>
<dbReference type="GO" id="GO:0031640">
    <property type="term" value="P:killing of cells of another organism"/>
    <property type="evidence" value="ECO:0007669"/>
    <property type="project" value="UniProtKB-KW"/>
</dbReference>
<dbReference type="InterPro" id="IPR031429">
    <property type="entry name" value="PSM_alpha"/>
</dbReference>
<dbReference type="NCBIfam" id="NF033425">
    <property type="entry name" value="PSM_alpha_1_2"/>
    <property type="match status" value="1"/>
</dbReference>
<dbReference type="Pfam" id="PF17063">
    <property type="entry name" value="PSMalpha"/>
    <property type="match status" value="1"/>
</dbReference>